<protein>
    <recommendedName>
        <fullName>Beta-toxin Tz1</fullName>
    </recommendedName>
    <alternativeName>
        <fullName>PT-beta NaTx14.1</fullName>
    </alternativeName>
</protein>
<feature type="signal peptide" evidence="3">
    <location>
        <begin position="1"/>
        <end position="20"/>
    </location>
</feature>
<feature type="chain" id="PRO_0000253776" description="Beta-toxin Tz1">
    <location>
        <begin position="21"/>
        <end position="84"/>
    </location>
</feature>
<feature type="domain" description="LCN-type CS-alpha/beta" evidence="2">
    <location>
        <begin position="21"/>
        <end position="83"/>
    </location>
</feature>
<feature type="modified residue" description="Arginine amide" evidence="1">
    <location>
        <position position="84"/>
    </location>
</feature>
<feature type="disulfide bond" evidence="2">
    <location>
        <begin position="31"/>
        <end position="82"/>
    </location>
</feature>
<feature type="disulfide bond" evidence="2">
    <location>
        <begin position="35"/>
        <end position="57"/>
    </location>
</feature>
<feature type="disulfide bond" evidence="2">
    <location>
        <begin position="43"/>
        <end position="63"/>
    </location>
</feature>
<feature type="disulfide bond" evidence="2">
    <location>
        <begin position="47"/>
        <end position="65"/>
    </location>
</feature>
<proteinExistence type="evidence at protein level"/>
<comment type="function">
    <text evidence="3 5">Beta toxins bind voltage-independently at site-4 of sodium channels (Nav) and shift the voltage of activation toward more negative potentials thereby affecting sodium channel activation and promoting spontaneous and repetitive firing. Strongly affects skeletal muscle channels Nav1.4/SCN4A, poorly affects the neuronal channels Nav1.6/SCN8A and Nav1.2/SCN2A. Induces spastic paralysis of rear limbs, increased salivation, apnea, tachycardia and increased perspiration.</text>
</comment>
<comment type="subcellular location">
    <subcellularLocation>
        <location>Secreted</location>
    </subcellularLocation>
</comment>
<comment type="tissue specificity">
    <text>Expressed by the venom gland.</text>
</comment>
<comment type="domain">
    <text evidence="6">Has the structural arrangement of an alpha-helix connected to antiparallel beta-sheets by disulfide bonds (CS-alpha/beta).</text>
</comment>
<comment type="mass spectrometry"/>
<comment type="mass spectrometry"/>
<comment type="miscellaneous">
    <text evidence="7">Negative results: does not affect the cardiac Nav1.5/SCN5A, the peripheral nerve channel Nav1.7/SCN9A, and the voltage-dependent potassium channel Kv1.5/KCNA5.</text>
</comment>
<comment type="miscellaneous">
    <text>EC(50) is 3.5 uM.</text>
</comment>
<comment type="similarity">
    <text evidence="6">Belongs to the long (4 C-C) scorpion toxin superfamily. Sodium channel inhibitor family. Beta subfamily.</text>
</comment>
<evidence type="ECO:0000250" key="1"/>
<evidence type="ECO:0000255" key="2">
    <source>
        <dbReference type="PROSITE-ProRule" id="PRU01210"/>
    </source>
</evidence>
<evidence type="ECO:0000269" key="3">
    <source>
    </source>
</evidence>
<evidence type="ECO:0000269" key="4">
    <source>
    </source>
</evidence>
<evidence type="ECO:0000269" key="5">
    <source>
    </source>
</evidence>
<evidence type="ECO:0000305" key="6"/>
<evidence type="ECO:0000305" key="7">
    <source>
    </source>
</evidence>
<accession>Q2NME3</accession>
<accession>Q1I166</accession>
<sequence>MTRFVLFICCFFLIGMVVECKDGYLVGNDGCKYSCFTRPGTYCANECSRVKGKDGYCYAWMACYCYSMPNWVKTWDRATNRCGRGK</sequence>
<organism>
    <name type="scientific">Tityus zulianus</name>
    <name type="common">Venezuelan scorpion</name>
    <dbReference type="NCBI Taxonomy" id="288787"/>
    <lineage>
        <taxon>Eukaryota</taxon>
        <taxon>Metazoa</taxon>
        <taxon>Ecdysozoa</taxon>
        <taxon>Arthropoda</taxon>
        <taxon>Chelicerata</taxon>
        <taxon>Arachnida</taxon>
        <taxon>Scorpiones</taxon>
        <taxon>Buthida</taxon>
        <taxon>Buthoidea</taxon>
        <taxon>Buthidae</taxon>
        <taxon>Tityus</taxon>
    </lineage>
</organism>
<dbReference type="EMBL" id="AY874060">
    <property type="protein sequence ID" value="AAX58773.1"/>
    <property type="molecule type" value="mRNA"/>
</dbReference>
<dbReference type="EMBL" id="DQ075235">
    <property type="protein sequence ID" value="AAZ29714.1"/>
    <property type="molecule type" value="mRNA"/>
</dbReference>
<dbReference type="EMBL" id="DQ075236">
    <property type="protein sequence ID" value="AAZ29715.1"/>
    <property type="molecule type" value="mRNA"/>
</dbReference>
<dbReference type="EMBL" id="DQ075238">
    <property type="protein sequence ID" value="AAZ29717.1"/>
    <property type="molecule type" value="mRNA"/>
</dbReference>
<dbReference type="EMBL" id="DQ075240">
    <property type="protein sequence ID" value="AAZ29719.1"/>
    <property type="molecule type" value="mRNA"/>
</dbReference>
<dbReference type="SMR" id="Q2NME3"/>
<dbReference type="GO" id="GO:0005576">
    <property type="term" value="C:extracellular region"/>
    <property type="evidence" value="ECO:0007669"/>
    <property type="project" value="UniProtKB-SubCell"/>
</dbReference>
<dbReference type="GO" id="GO:0019871">
    <property type="term" value="F:sodium channel inhibitor activity"/>
    <property type="evidence" value="ECO:0007669"/>
    <property type="project" value="InterPro"/>
</dbReference>
<dbReference type="GO" id="GO:0090729">
    <property type="term" value="F:toxin activity"/>
    <property type="evidence" value="ECO:0007669"/>
    <property type="project" value="UniProtKB-KW"/>
</dbReference>
<dbReference type="GO" id="GO:0006952">
    <property type="term" value="P:defense response"/>
    <property type="evidence" value="ECO:0007669"/>
    <property type="project" value="InterPro"/>
</dbReference>
<dbReference type="CDD" id="cd23106">
    <property type="entry name" value="neurotoxins_LC_scorpion"/>
    <property type="match status" value="1"/>
</dbReference>
<dbReference type="FunFam" id="3.30.30.10:FF:000002">
    <property type="entry name" value="Alpha-like toxin BmK-M1"/>
    <property type="match status" value="1"/>
</dbReference>
<dbReference type="Gene3D" id="3.30.30.10">
    <property type="entry name" value="Knottin, scorpion toxin-like"/>
    <property type="match status" value="1"/>
</dbReference>
<dbReference type="InterPro" id="IPR044062">
    <property type="entry name" value="LCN-type_CS_alpha_beta_dom"/>
</dbReference>
<dbReference type="InterPro" id="IPR003614">
    <property type="entry name" value="Scorpion_toxin-like"/>
</dbReference>
<dbReference type="InterPro" id="IPR036574">
    <property type="entry name" value="Scorpion_toxin-like_sf"/>
</dbReference>
<dbReference type="InterPro" id="IPR018218">
    <property type="entry name" value="Scorpion_toxinL"/>
</dbReference>
<dbReference type="InterPro" id="IPR002061">
    <property type="entry name" value="Scorpion_toxinL/defensin"/>
</dbReference>
<dbReference type="Pfam" id="PF00537">
    <property type="entry name" value="Toxin_3"/>
    <property type="match status" value="1"/>
</dbReference>
<dbReference type="PRINTS" id="PR00285">
    <property type="entry name" value="SCORPNTOXIN"/>
</dbReference>
<dbReference type="SMART" id="SM00505">
    <property type="entry name" value="Knot1"/>
    <property type="match status" value="1"/>
</dbReference>
<dbReference type="SUPFAM" id="SSF57095">
    <property type="entry name" value="Scorpion toxin-like"/>
    <property type="match status" value="1"/>
</dbReference>
<dbReference type="PROSITE" id="PS51863">
    <property type="entry name" value="LCN_CSAB"/>
    <property type="match status" value="1"/>
</dbReference>
<name>SCX1_TITZU</name>
<reference key="1">
    <citation type="journal article" date="2004" name="Toxicon">
        <title>Isolation, molecular cloning and functional characterization of a novel beta-toxin from the Venezuelan scorpion, Tityus zulianus.</title>
        <authorList>
            <person name="Borges A."/>
            <person name="Alfonzo M.J."/>
            <person name="Garcia C.C."/>
            <person name="Winand N.J."/>
            <person name="Leipold E."/>
            <person name="Heinemann S.H."/>
        </authorList>
    </citation>
    <scope>NUCLEOTIDE SEQUENCE [MRNA]</scope>
    <scope>PROTEIN SEQUENCE OF 21-30</scope>
    <scope>FUNCTION</scope>
    <scope>EC(50)</scope>
    <scope>MASS SPECTROMETRY</scope>
    <source>
        <tissue>Venom</tissue>
        <tissue>Venom gland</tissue>
    </source>
</reference>
<reference key="2">
    <citation type="journal article" date="2006" name="Comp. Biochem. Physiol.">
        <title>Diversity of long-chain toxins in Tityus zulianus and Tityus discrepans venoms (Scorpiones, Buthidae): molecular, immunological, and mass spectral analyses.</title>
        <authorList>
            <person name="Borges A."/>
            <person name="Garcia C.C."/>
            <person name="Lugo E."/>
            <person name="Alfonzo M.J."/>
            <person name="Jowers M.J."/>
            <person name="Op den Camp H.J.M."/>
        </authorList>
    </citation>
    <scope>NUCLEOTIDE SEQUENCE [MRNA] OF 14-86</scope>
    <scope>MASS SPECTROMETRY</scope>
    <source>
        <tissue>Venom</tissue>
        <tissue>Venom gland</tissue>
    </source>
</reference>
<reference key="3">
    <citation type="journal article" date="2006" name="Mol. Pharmacol.">
        <title>Subtype specificity of scorpion beta-toxin Tz1 interaction with voltage-gated sodium channels is determined by the pore loop of domain 3.</title>
        <authorList>
            <person name="Leipold E."/>
            <person name="Hansel A."/>
            <person name="Borges A."/>
            <person name="Heinemann S.H."/>
        </authorList>
    </citation>
    <scope>FUNCTION</scope>
</reference>
<reference key="4">
    <citation type="journal article" date="2012" name="PLoS ONE">
        <title>Identification and phylogenetic analysis of Tityus pachyurus and Tityus obscurus novel putative Na+-channel scorpion toxins.</title>
        <authorList>
            <person name="Guerrero-Vargas J.A."/>
            <person name="Mourao C.B."/>
            <person name="Quintero-Hernandez V."/>
            <person name="Possani L.D."/>
            <person name="Schwartz E.F."/>
        </authorList>
    </citation>
    <scope>NOMENCLATURE</scope>
</reference>
<keyword id="KW-0027">Amidation</keyword>
<keyword id="KW-0903">Direct protein sequencing</keyword>
<keyword id="KW-1015">Disulfide bond</keyword>
<keyword id="KW-0872">Ion channel impairing toxin</keyword>
<keyword id="KW-0528">Neurotoxin</keyword>
<keyword id="KW-0964">Secreted</keyword>
<keyword id="KW-0732">Signal</keyword>
<keyword id="KW-0800">Toxin</keyword>
<keyword id="KW-0738">Voltage-gated sodium channel impairing toxin</keyword>